<sequence>MSTEHVSNVYSVESLLSNVEKSSVSPTESIEDRNEFMITEDVMSSWQRMAATISLQQKLLMMQQTMPRPPPVNILGNFPFGFLNAPMFWQQYLRSMAMGIIPQNPESPSASVWNRTPTPPVEIKPFHCQKCTKLFSTIAALEQHQQVHVSDKQFECKQCGKTFKRSSTLSTHLLIHSDTRPYPCEYCGKRFHQKSDMKKHTYIHTGEKPHKCTVCGKAFSQSSNLITHTRKHTGFKPFACDVCGRTFQRKVDRRRHRESHHPGHPEECVSASQISSDLSPKGYMTPPTSNGYLDSSDEFLNVFRLPAELLAIKAEMGEEMEEADDEEEKVLNLSVS</sequence>
<organism evidence="14">
    <name type="scientific">Caenorhabditis elegans</name>
    <dbReference type="NCBI Taxonomy" id="6239"/>
    <lineage>
        <taxon>Eukaryota</taxon>
        <taxon>Metazoa</taxon>
        <taxon>Ecdysozoa</taxon>
        <taxon>Nematoda</taxon>
        <taxon>Chromadorea</taxon>
        <taxon>Rhabditida</taxon>
        <taxon>Rhabditina</taxon>
        <taxon>Rhabditomorpha</taxon>
        <taxon>Rhabditoidea</taxon>
        <taxon>Rhabditidae</taxon>
        <taxon>Peloderinae</taxon>
        <taxon>Caenorhabditis</taxon>
    </lineage>
</organism>
<feature type="chain" id="PRO_0000456630" description="Zinc finger protein GFI1 homolog pag-3">
    <location>
        <begin position="1"/>
        <end position="336"/>
    </location>
</feature>
<feature type="zinc finger region" description="C2H2-type 1" evidence="1">
    <location>
        <begin position="126"/>
        <end position="148"/>
    </location>
</feature>
<feature type="zinc finger region" description="C2H2-type 2" evidence="1">
    <location>
        <begin position="154"/>
        <end position="176"/>
    </location>
</feature>
<feature type="zinc finger region" description="C2H2-type 3" evidence="1">
    <location>
        <begin position="182"/>
        <end position="204"/>
    </location>
</feature>
<feature type="zinc finger region" description="C2H2-type 4" evidence="1">
    <location>
        <begin position="210"/>
        <end position="232"/>
    </location>
</feature>
<feature type="zinc finger region" description="C2H2-type 5" evidence="1">
    <location>
        <begin position="238"/>
        <end position="260"/>
    </location>
</feature>
<feature type="region of interest" description="Disordered" evidence="2">
    <location>
        <begin position="253"/>
        <end position="290"/>
    </location>
</feature>
<feature type="mutagenesis site" description="In ls65; misexpression of touch neuron genes in the BDU neurons. Motility defects, lethargic and uncoordinated." evidence="7 8">
    <location>
        <begin position="47"/>
        <end position="336"/>
    </location>
</feature>
<feature type="mutagenesis site" description="In n3098; misexpression of touch neuron genes in the BDU neurons. Increased number of cell corpses in the anterior ventral nerve cords in a ced-1 mutant background. Motility defects, lethargic and uncoordinated. Absence of VB motoneurons and the abnormality in VA motoneurons. Significantly increased levels of ida-1 in a subset of neurons including VC4, VC5, and ALA. Increased numbers of VC and VC-like neurons in the ventral nerve cords of adult hermaphrodites in a ced-3 mutant background." evidence="3 4 5">
    <location>
        <begin position="113"/>
        <end position="336"/>
    </location>
</feature>
<feature type="mutagenesis site" description="In ls64; misexpression of touch neuron genes in the BDU neurons. Motility defects, lethargic and uncoordinated. Increased numbers of VC and VC-like neurons in the ventral nerve cords of adult hermaphrodites." evidence="3 7 8">
    <location>
        <begin position="115"/>
        <end position="336"/>
    </location>
</feature>
<feature type="mutagenesis site" description="In gv560; significantly increased levels of ida-1 in a subset of neurons including VC4, VC5, and ALA. Significantly increased levels of synaptotagmin snt-1 and serotonin, whereas rab-3 and unc-31 levels remain unchanged. Significant increase in egg-laying in response to exogenous serotonin. Increased sensitivity to aldicarb. Increased numbers of presynaptic dense-core vesicles (DCVs) in ventral cord neurons. Extra presumptive neurons along the posterior ventral midline and an uncoordinated phenotype. Reduction in dauer formation at 25 degrees Celsius in a daf-28 mutant background." evidence="5">
    <original>S</original>
    <variation>F</variation>
    <location>
        <position position="223"/>
    </location>
</feature>
<feature type="mutagenesis site" description="In ls20; misexpression of touch neuron genes in the BDU neurons. Homeotic transformation of BDU to ALM neurons, based on altered cell body and axonal morphology and ectopically expressed ALM markers in BDU, including abnormal expression of mec-3, mec-4, mec-7, mec-17 and eat-4. Motility defects, lethargic and uncoordinated. Significantly increased levels of ida-1 in a subset of neurons including VC4, VC5, and ALA. Increased number of cell corpses in the anterior ventral nerve cords in a ced-1 mutant background." evidence="3 5 6 7 8">
    <original>H</original>
    <variation>Y</variation>
    <location>
        <position position="228"/>
    </location>
</feature>
<name>GFI1H_CAEEL</name>
<dbReference type="EMBL" id="U63996">
    <property type="protein sequence ID" value="AAC47234.1"/>
    <property type="molecule type" value="mRNA"/>
</dbReference>
<dbReference type="EMBL" id="BX284606">
    <property type="protein sequence ID" value="CAB05729.2"/>
    <property type="molecule type" value="Genomic_DNA"/>
</dbReference>
<dbReference type="PIR" id="T22215">
    <property type="entry name" value="T22215"/>
</dbReference>
<dbReference type="RefSeq" id="NP_510480.1">
    <property type="nucleotide sequence ID" value="NM_078079.6"/>
</dbReference>
<dbReference type="SMR" id="G5EDE1"/>
<dbReference type="FunCoup" id="G5EDE1">
    <property type="interactions" value="1395"/>
</dbReference>
<dbReference type="IntAct" id="G5EDE1">
    <property type="interactions" value="6"/>
</dbReference>
<dbReference type="STRING" id="6239.F45B8.4.1"/>
<dbReference type="PaxDb" id="6239-F45B8.4"/>
<dbReference type="EnsemblMetazoa" id="F45B8.4.1">
    <property type="protein sequence ID" value="F45B8.4.1"/>
    <property type="gene ID" value="WBGene00003909"/>
</dbReference>
<dbReference type="GeneID" id="181588"/>
<dbReference type="KEGG" id="cel:CELE_F45B8.4"/>
<dbReference type="AGR" id="WB:WBGene00003909"/>
<dbReference type="CTD" id="181588"/>
<dbReference type="WormBase" id="F45B8.4">
    <property type="protein sequence ID" value="CE24977"/>
    <property type="gene ID" value="WBGene00003909"/>
    <property type="gene designation" value="pag-3"/>
</dbReference>
<dbReference type="eggNOG" id="KOG1721">
    <property type="taxonomic scope" value="Eukaryota"/>
</dbReference>
<dbReference type="GeneTree" id="ENSGT00940000172399"/>
<dbReference type="HOGENOM" id="CLU_071394_0_0_1"/>
<dbReference type="InParanoid" id="G5EDE1"/>
<dbReference type="OMA" id="PAFWQQY"/>
<dbReference type="OrthoDB" id="6155966at2759"/>
<dbReference type="PRO" id="PR:G5EDE1"/>
<dbReference type="Proteomes" id="UP000001940">
    <property type="component" value="Chromosome X"/>
</dbReference>
<dbReference type="Bgee" id="WBGene00003909">
    <property type="expression patterns" value="Expressed in pharyngeal muscle cell (C elegans) and 3 other cell types or tissues"/>
</dbReference>
<dbReference type="GO" id="GO:0030424">
    <property type="term" value="C:axon"/>
    <property type="evidence" value="ECO:0007669"/>
    <property type="project" value="UniProtKB-SubCell"/>
</dbReference>
<dbReference type="GO" id="GO:0005634">
    <property type="term" value="C:nucleus"/>
    <property type="evidence" value="ECO:0000314"/>
    <property type="project" value="WormBase"/>
</dbReference>
<dbReference type="GO" id="GO:0043204">
    <property type="term" value="C:perikaryon"/>
    <property type="evidence" value="ECO:0007669"/>
    <property type="project" value="UniProtKB-SubCell"/>
</dbReference>
<dbReference type="GO" id="GO:0003700">
    <property type="term" value="F:DNA-binding transcription factor activity"/>
    <property type="evidence" value="ECO:0000318"/>
    <property type="project" value="GO_Central"/>
</dbReference>
<dbReference type="GO" id="GO:0001227">
    <property type="term" value="F:DNA-binding transcription repressor activity, RNA polymerase II-specific"/>
    <property type="evidence" value="ECO:0000314"/>
    <property type="project" value="WormBase"/>
</dbReference>
<dbReference type="GO" id="GO:0000978">
    <property type="term" value="F:RNA polymerase II cis-regulatory region sequence-specific DNA binding"/>
    <property type="evidence" value="ECO:0000318"/>
    <property type="project" value="GO_Central"/>
</dbReference>
<dbReference type="GO" id="GO:0003714">
    <property type="term" value="F:transcription corepressor activity"/>
    <property type="evidence" value="ECO:0000315"/>
    <property type="project" value="WormBase"/>
</dbReference>
<dbReference type="GO" id="GO:0001222">
    <property type="term" value="F:transcription corepressor binding"/>
    <property type="evidence" value="ECO:0000353"/>
    <property type="project" value="WormBase"/>
</dbReference>
<dbReference type="GO" id="GO:0008270">
    <property type="term" value="F:zinc ion binding"/>
    <property type="evidence" value="ECO:0007669"/>
    <property type="project" value="UniProtKB-KW"/>
</dbReference>
<dbReference type="GO" id="GO:0043066">
    <property type="term" value="P:negative regulation of apoptotic process"/>
    <property type="evidence" value="ECO:0000315"/>
    <property type="project" value="WormBase"/>
</dbReference>
<dbReference type="GO" id="GO:0046676">
    <property type="term" value="P:negative regulation of insulin secretion"/>
    <property type="evidence" value="ECO:0000315"/>
    <property type="project" value="WormBase"/>
</dbReference>
<dbReference type="GO" id="GO:0046929">
    <property type="term" value="P:negative regulation of neurotransmitter secretion"/>
    <property type="evidence" value="ECO:0000315"/>
    <property type="project" value="WormBase"/>
</dbReference>
<dbReference type="GO" id="GO:0000122">
    <property type="term" value="P:negative regulation of transcription by RNA polymerase II"/>
    <property type="evidence" value="ECO:0000314"/>
    <property type="project" value="WormBase"/>
</dbReference>
<dbReference type="GO" id="GO:0014018">
    <property type="term" value="P:neuroblast fate specification"/>
    <property type="evidence" value="ECO:0000315"/>
    <property type="project" value="WormBase"/>
</dbReference>
<dbReference type="GO" id="GO:0043058">
    <property type="term" value="P:regulation of backward locomotion"/>
    <property type="evidence" value="ECO:0000315"/>
    <property type="project" value="WormBase"/>
</dbReference>
<dbReference type="GO" id="GO:0043059">
    <property type="term" value="P:regulation of forward locomotion"/>
    <property type="evidence" value="ECO:0000315"/>
    <property type="project" value="WormBase"/>
</dbReference>
<dbReference type="GO" id="GO:0045664">
    <property type="term" value="P:regulation of neuron differentiation"/>
    <property type="evidence" value="ECO:0000315"/>
    <property type="project" value="WormBase"/>
</dbReference>
<dbReference type="GO" id="GO:0006357">
    <property type="term" value="P:regulation of transcription by RNA polymerase II"/>
    <property type="evidence" value="ECO:0000318"/>
    <property type="project" value="GO_Central"/>
</dbReference>
<dbReference type="FunFam" id="3.30.160.60:FF:000446">
    <property type="entry name" value="Zinc finger protein"/>
    <property type="match status" value="1"/>
</dbReference>
<dbReference type="FunFam" id="3.30.160.60:FF:000245">
    <property type="entry name" value="zinc finger protein Gfi-1"/>
    <property type="match status" value="1"/>
</dbReference>
<dbReference type="FunFam" id="3.30.160.60:FF:000208">
    <property type="entry name" value="zinc finger protein Gfi-1b"/>
    <property type="match status" value="1"/>
</dbReference>
<dbReference type="FunFam" id="3.30.160.60:FF:000432">
    <property type="entry name" value="zinc finger protein Gfi-1b isoform X1"/>
    <property type="match status" value="1"/>
</dbReference>
<dbReference type="Gene3D" id="3.30.160.60">
    <property type="entry name" value="Classic Zinc Finger"/>
    <property type="match status" value="5"/>
</dbReference>
<dbReference type="InterPro" id="IPR050331">
    <property type="entry name" value="Zinc_finger"/>
</dbReference>
<dbReference type="InterPro" id="IPR036236">
    <property type="entry name" value="Znf_C2H2_sf"/>
</dbReference>
<dbReference type="InterPro" id="IPR013087">
    <property type="entry name" value="Znf_C2H2_type"/>
</dbReference>
<dbReference type="PANTHER" id="PTHR16515:SF54">
    <property type="entry name" value="GROWTH FACTOR-INDEPENDENT 1B TRANSCRIPTION REPRESSOR"/>
    <property type="match status" value="1"/>
</dbReference>
<dbReference type="PANTHER" id="PTHR16515">
    <property type="entry name" value="PR DOMAIN ZINC FINGER PROTEIN"/>
    <property type="match status" value="1"/>
</dbReference>
<dbReference type="Pfam" id="PF00096">
    <property type="entry name" value="zf-C2H2"/>
    <property type="match status" value="5"/>
</dbReference>
<dbReference type="SMART" id="SM00355">
    <property type="entry name" value="ZnF_C2H2"/>
    <property type="match status" value="5"/>
</dbReference>
<dbReference type="SUPFAM" id="SSF57667">
    <property type="entry name" value="beta-beta-alpha zinc fingers"/>
    <property type="match status" value="3"/>
</dbReference>
<dbReference type="PROSITE" id="PS00028">
    <property type="entry name" value="ZINC_FINGER_C2H2_1"/>
    <property type="match status" value="5"/>
</dbReference>
<dbReference type="PROSITE" id="PS50157">
    <property type="entry name" value="ZINC_FINGER_C2H2_2"/>
    <property type="match status" value="5"/>
</dbReference>
<evidence type="ECO:0000255" key="1">
    <source>
        <dbReference type="PROSITE-ProRule" id="PRU00042"/>
    </source>
</evidence>
<evidence type="ECO:0000256" key="2">
    <source>
        <dbReference type="SAM" id="MobiDB-lite"/>
    </source>
</evidence>
<evidence type="ECO:0000269" key="3">
    <source>
    </source>
</evidence>
<evidence type="ECO:0000269" key="4">
    <source>
    </source>
</evidence>
<evidence type="ECO:0000269" key="5">
    <source>
    </source>
</evidence>
<evidence type="ECO:0000269" key="6">
    <source>
    </source>
</evidence>
<evidence type="ECO:0000269" key="7">
    <source>
    </source>
</evidence>
<evidence type="ECO:0000269" key="8">
    <source>
    </source>
</evidence>
<evidence type="ECO:0000303" key="9">
    <source>
    </source>
</evidence>
<evidence type="ECO:0000303" key="10">
    <source>
    </source>
</evidence>
<evidence type="ECO:0000303" key="11">
    <source>
    </source>
</evidence>
<evidence type="ECO:0000305" key="12"/>
<evidence type="ECO:0000312" key="13">
    <source>
        <dbReference type="EMBL" id="AAC47234.1"/>
    </source>
</evidence>
<evidence type="ECO:0000312" key="14">
    <source>
        <dbReference type="Proteomes" id="UP000001940"/>
    </source>
</evidence>
<evidence type="ECO:0000312" key="15">
    <source>
        <dbReference type="WormBase" id="F45B8.4"/>
    </source>
</evidence>
<protein>
    <recommendedName>
        <fullName evidence="11">Zinc finger protein GFI1 homolog pag-3</fullName>
    </recommendedName>
    <alternativeName>
        <fullName evidence="10 15">Pattern of reporter gene expression abnormal protein 3</fullName>
    </alternativeName>
    <alternativeName>
        <fullName evidence="9">Transcription factor pag-3</fullName>
    </alternativeName>
</protein>
<proteinExistence type="evidence at protein level"/>
<reference evidence="13" key="1">
    <citation type="journal article" date="1996" name="Genetics">
        <title>pag-3, a Caenorhabditis elegans gene involved in touch neuron gene expression and coordinated movement.</title>
        <authorList>
            <person name="Jia Y."/>
            <person name="Xie G."/>
            <person name="Aamodt E."/>
        </authorList>
    </citation>
    <scope>NUCLEOTIDE SEQUENCE [MRNA]</scope>
    <scope>FUNCTION</scope>
    <scope>MUTAGENESIS OF 47-GLN--SER-365; 115-ARG--SER-336 AND HIS-228</scope>
    <source>
        <strain evidence="13">Bristol N2</strain>
    </source>
</reference>
<reference evidence="13" key="2">
    <citation type="journal article" date="1997" name="Development">
        <title>The C. elegans gene pag-3 is homologous to the zinc finger proto-oncogene gfi-1.</title>
        <authorList>
            <person name="Jia Y."/>
            <person name="Xie G."/>
            <person name="McDermott J.B."/>
            <person name="Aamodt E."/>
        </authorList>
    </citation>
    <scope>NUCLEOTIDE SEQUENCE [MRNA]</scope>
    <scope>FUNCTION</scope>
    <scope>SUBCELLULAR LOCATION</scope>
    <scope>TISSUE SPECIFICITY</scope>
    <scope>DEVELOPMENTAL STAGE</scope>
    <scope>MUTAGENESIS OF 47-GLN--SER-365; 115-ARG--SER-336 AND HIS-228</scope>
    <source>
        <strain evidence="13">Bristol N2</strain>
    </source>
</reference>
<reference evidence="14" key="3">
    <citation type="journal article" date="1998" name="Science">
        <title>Genome sequence of the nematode C. elegans: a platform for investigating biology.</title>
        <authorList>
            <consortium name="The C. elegans sequencing consortium"/>
        </authorList>
    </citation>
    <scope>NUCLEOTIDE SEQUENCE [LARGE SCALE GENOMIC DNA]</scope>
    <source>
        <strain evidence="14">Bristol N2</strain>
    </source>
</reference>
<reference evidence="12" key="4">
    <citation type="journal article" date="2002" name="Development">
        <title>PAG-3, a Zn-finger transcription factor, determines neuroblast fate in C. elegans.</title>
        <authorList>
            <person name="Cameron S."/>
            <person name="Clark S.G."/>
            <person name="McDermott J.B."/>
            <person name="Aamodt E."/>
            <person name="Horvitz H.R."/>
        </authorList>
    </citation>
    <scope>FUNCTION</scope>
    <scope>TISSUE SPECIFICITY</scope>
    <scope>DEVELOPMENTAL STAGE</scope>
    <scope>MUTAGENESIS OF 113-TRP--SER-336; 115-ARG--SER-336 AND HIS-228</scope>
</reference>
<reference evidence="12" key="5">
    <citation type="journal article" date="2008" name="Dev. Biol.">
        <title>unc-3-dependent repression of specific motor neuron fates in Caenorhabditis elegans.</title>
        <authorList>
            <person name="Prasad B."/>
            <person name="Karakuzu O."/>
            <person name="Reed R.R."/>
            <person name="Cameron S."/>
        </authorList>
    </citation>
    <scope>FUNCTION</scope>
    <scope>INTERACTION WITH UNC-3</scope>
    <scope>MUTAGENESIS OF 113-TRP--SER-336</scope>
</reference>
<reference evidence="12" key="6">
    <citation type="journal article" date="2009" name="PLoS Genet.">
        <title>Loss of the transcriptional repressor PAG-3/Gfi-1 results in enhanced neurosecretion that is dependent on the dense-core vesicle membrane protein IDA-1/IA-2.</title>
        <authorList>
            <person name="Cai T."/>
            <person name="Hirai H."/>
            <person name="Fukushige T."/>
            <person name="Yu P."/>
            <person name="Zhang G."/>
            <person name="Notkins A.L."/>
            <person name="Krause M."/>
        </authorList>
    </citation>
    <scope>FUNCTION</scope>
    <scope>MUTAGENESIS OF 113-TRP--SER-336; SER-223 AND HIS-228</scope>
</reference>
<reference evidence="12" key="7">
    <citation type="journal article" date="2015" name="Dev. Cell">
        <title>A competition mechanism for a homeotic neuron identity transformation in C. elegans.</title>
        <authorList>
            <person name="Gordon P.M."/>
            <person name="Hobert O."/>
        </authorList>
    </citation>
    <scope>FUNCTION</scope>
    <scope>MUTAGENESIS OF HIS-228</scope>
</reference>
<gene>
    <name evidence="15" type="primary">pag-3</name>
    <name evidence="15" type="ORF">F45B8.4</name>
</gene>
<keyword id="KW-0966">Cell projection</keyword>
<keyword id="KW-0479">Metal-binding</keyword>
<keyword id="KW-0539">Nucleus</keyword>
<keyword id="KW-1185">Reference proteome</keyword>
<keyword id="KW-0677">Repeat</keyword>
<keyword id="KW-0804">Transcription</keyword>
<keyword id="KW-0805">Transcription regulation</keyword>
<keyword id="KW-0862">Zinc</keyword>
<keyword id="KW-0863">Zinc-finger</keyword>
<comment type="function">
    <text evidence="3 4 5 6 7 8">Transcription factor (PubMed:26096732). Plays a role in the determination of neuroblast cell fate and neuronal differentiation (PubMed:11923211, PubMed:26096732). Negatively modulates expression of several components of dense-core vesicles (DCVs), thereby, in a DCV membrane protein ida-1-dependent manner, regulating neurosecretion (PubMed:19343207). Negatively modulates the transcription of its own gene, the mechanosensory gene mec-3, and also other touch neuron-specific genes in the BDU neurons; required for coordinated movement (PubMed:26096732, PubMed:8770591, PubMed:9169852). Required to determine the identity of BDU sensory neurons in concert with transcription factor unc-86, regulating expression of a number of genes, including transcription factors ceh-14 and ahr-1, neuropeptides flp-10, nlp-1 and nlp-15, and tyramine receptor-encoding ser-2 (PubMed:26096732). Acts in concert with non-canonical WNT signaling to negatively modulate transcription of mec-3 gene in BDU neurons (PubMed:26096732). May act in concert with transcription factor unc-3 in motor neuron fate determination (PubMed:18817768). May play a role programmed cell death (PubMed:11923211).</text>
</comment>
<comment type="subunit">
    <text evidence="4">May interact with transcription factor unc-3.</text>
</comment>
<comment type="subcellular location">
    <subcellularLocation>
        <location evidence="8">Nucleus</location>
    </subcellularLocation>
    <subcellularLocation>
        <location evidence="8">Cell projection</location>
        <location evidence="8">Axon</location>
    </subcellularLocation>
    <subcellularLocation>
        <location evidence="8">Perikaryon</location>
    </subcellularLocation>
</comment>
<comment type="tissue specificity">
    <text evidence="3 8">Expressed in the BDU neurons, the touch neurons, the VA, VB and VC motor neurons, two AVF interneurons and unidentified neurons of the retrovesicular ganglion (at protein level).</text>
</comment>
<comment type="developmental stage">
    <text evidence="3 8">Expressed in the Pn.aa neuroblasts and in each of their descendant cells, the Pn.aaa, Pn.aap, Pn.aaaa and Pn.aaap cells and the three differentiating neurons generated by each Pn.aa neuroblast; expression is transient, becoming undetectable shortly after the cells are generated in the larval L1 stage (at protein level) (PubMed:11923211). Expressed in the AVM and PVM touch neurons at the L1 larval stage until the early L2 stage (PubMed:9169852). Expressed in the VA and VB motor neurons and their immediate precursors in late L1 to early L2 stage (PubMed:9169852).</text>
</comment>
<accession>G5EDE1</accession>